<organism>
    <name type="scientific">Listeria welshimeri serovar 6b (strain ATCC 35897 / DSM 20650 / CCUG 15529 / CIP 8149 / NCTC 11857 / SLCC 5334 / V8)</name>
    <dbReference type="NCBI Taxonomy" id="386043"/>
    <lineage>
        <taxon>Bacteria</taxon>
        <taxon>Bacillati</taxon>
        <taxon>Bacillota</taxon>
        <taxon>Bacilli</taxon>
        <taxon>Bacillales</taxon>
        <taxon>Listeriaceae</taxon>
        <taxon>Listeria</taxon>
    </lineage>
</organism>
<sequence>MGQIIDGEKLAKEIQERVTTEVAELAKIDKKPGLAVVLVGDNQASRTYVRNKQKRTEEAGMKSVLIELPETVSEEKLLEVVEELNTDDTIHGILVQLPLPKHISEEKVIDTISYDKDVDGFHPVNVGNLFIGKDSFVPCTPAGIIELIKSTGTQIEGKRAVVIGRSNIVGKPVAQLLLNENATVTIAHSRTKNLPEVAKEADILVVATGLAKFVKKEYIKPGAIVIDVGMDRDENNKLCGDVDFDDVIEEAGFITPVPGGVGPMTITMLLANTLKAAKRIWKMN</sequence>
<proteinExistence type="inferred from homology"/>
<feature type="chain" id="PRO_0000305838" description="Bifunctional protein FolD">
    <location>
        <begin position="1"/>
        <end position="284"/>
    </location>
</feature>
<feature type="binding site" evidence="1">
    <location>
        <begin position="164"/>
        <end position="166"/>
    </location>
    <ligand>
        <name>NADP(+)</name>
        <dbReference type="ChEBI" id="CHEBI:58349"/>
    </ligand>
</feature>
<feature type="binding site" evidence="1">
    <location>
        <position position="189"/>
    </location>
    <ligand>
        <name>NADP(+)</name>
        <dbReference type="ChEBI" id="CHEBI:58349"/>
    </ligand>
</feature>
<name>FOLD_LISW6</name>
<comment type="function">
    <text evidence="1">Catalyzes the oxidation of 5,10-methylenetetrahydrofolate to 5,10-methenyltetrahydrofolate and then the hydrolysis of 5,10-methenyltetrahydrofolate to 10-formyltetrahydrofolate.</text>
</comment>
<comment type="catalytic activity">
    <reaction evidence="1">
        <text>(6R)-5,10-methylene-5,6,7,8-tetrahydrofolate + NADP(+) = (6R)-5,10-methenyltetrahydrofolate + NADPH</text>
        <dbReference type="Rhea" id="RHEA:22812"/>
        <dbReference type="ChEBI" id="CHEBI:15636"/>
        <dbReference type="ChEBI" id="CHEBI:57455"/>
        <dbReference type="ChEBI" id="CHEBI:57783"/>
        <dbReference type="ChEBI" id="CHEBI:58349"/>
        <dbReference type="EC" id="1.5.1.5"/>
    </reaction>
</comment>
<comment type="catalytic activity">
    <reaction evidence="1">
        <text>(6R)-5,10-methenyltetrahydrofolate + H2O = (6R)-10-formyltetrahydrofolate + H(+)</text>
        <dbReference type="Rhea" id="RHEA:23700"/>
        <dbReference type="ChEBI" id="CHEBI:15377"/>
        <dbReference type="ChEBI" id="CHEBI:15378"/>
        <dbReference type="ChEBI" id="CHEBI:57455"/>
        <dbReference type="ChEBI" id="CHEBI:195366"/>
        <dbReference type="EC" id="3.5.4.9"/>
    </reaction>
</comment>
<comment type="pathway">
    <text evidence="1">One-carbon metabolism; tetrahydrofolate interconversion.</text>
</comment>
<comment type="subunit">
    <text evidence="1">Homodimer.</text>
</comment>
<comment type="similarity">
    <text evidence="1">Belongs to the tetrahydrofolate dehydrogenase/cyclohydrolase family.</text>
</comment>
<evidence type="ECO:0000255" key="1">
    <source>
        <dbReference type="HAMAP-Rule" id="MF_01576"/>
    </source>
</evidence>
<accession>A0AIG1</accession>
<keyword id="KW-0028">Amino-acid biosynthesis</keyword>
<keyword id="KW-0368">Histidine biosynthesis</keyword>
<keyword id="KW-0378">Hydrolase</keyword>
<keyword id="KW-0486">Methionine biosynthesis</keyword>
<keyword id="KW-0511">Multifunctional enzyme</keyword>
<keyword id="KW-0521">NADP</keyword>
<keyword id="KW-0554">One-carbon metabolism</keyword>
<keyword id="KW-0560">Oxidoreductase</keyword>
<keyword id="KW-0658">Purine biosynthesis</keyword>
<reference key="1">
    <citation type="journal article" date="2006" name="J. Bacteriol.">
        <title>Whole-genome sequence of Listeria welshimeri reveals common steps in genome reduction with Listeria innocua as compared to Listeria monocytogenes.</title>
        <authorList>
            <person name="Hain T."/>
            <person name="Steinweg C."/>
            <person name="Kuenne C.T."/>
            <person name="Billion A."/>
            <person name="Ghai R."/>
            <person name="Chatterjee S.S."/>
            <person name="Domann E."/>
            <person name="Kaerst U."/>
            <person name="Goesmann A."/>
            <person name="Bekel T."/>
            <person name="Bartels D."/>
            <person name="Kaiser O."/>
            <person name="Meyer F."/>
            <person name="Puehler A."/>
            <person name="Weisshaar B."/>
            <person name="Wehland J."/>
            <person name="Liang C."/>
            <person name="Dandekar T."/>
            <person name="Lampidis R."/>
            <person name="Kreft J."/>
            <person name="Goebel W."/>
            <person name="Chakraborty T."/>
        </authorList>
    </citation>
    <scope>NUCLEOTIDE SEQUENCE [LARGE SCALE GENOMIC DNA]</scope>
    <source>
        <strain>ATCC 35897 / DSM 20650 / CCUG 15529 / CIP 8149 / NCTC 11857 / SLCC 5334 / V8</strain>
    </source>
</reference>
<dbReference type="EC" id="1.5.1.5" evidence="1"/>
<dbReference type="EC" id="3.5.4.9" evidence="1"/>
<dbReference type="EMBL" id="AM263198">
    <property type="protein sequence ID" value="CAK20793.1"/>
    <property type="molecule type" value="Genomic_DNA"/>
</dbReference>
<dbReference type="RefSeq" id="WP_011702174.1">
    <property type="nucleotide sequence ID" value="NC_008555.1"/>
</dbReference>
<dbReference type="SMR" id="A0AIG1"/>
<dbReference type="STRING" id="386043.lwe1375"/>
<dbReference type="GeneID" id="61189251"/>
<dbReference type="KEGG" id="lwe:lwe1375"/>
<dbReference type="eggNOG" id="COG0190">
    <property type="taxonomic scope" value="Bacteria"/>
</dbReference>
<dbReference type="HOGENOM" id="CLU_034045_2_1_9"/>
<dbReference type="OrthoDB" id="9803580at2"/>
<dbReference type="UniPathway" id="UPA00193"/>
<dbReference type="Proteomes" id="UP000000779">
    <property type="component" value="Chromosome"/>
</dbReference>
<dbReference type="GO" id="GO:0005829">
    <property type="term" value="C:cytosol"/>
    <property type="evidence" value="ECO:0007669"/>
    <property type="project" value="TreeGrafter"/>
</dbReference>
<dbReference type="GO" id="GO:0004477">
    <property type="term" value="F:methenyltetrahydrofolate cyclohydrolase activity"/>
    <property type="evidence" value="ECO:0007669"/>
    <property type="project" value="UniProtKB-UniRule"/>
</dbReference>
<dbReference type="GO" id="GO:0004488">
    <property type="term" value="F:methylenetetrahydrofolate dehydrogenase (NADP+) activity"/>
    <property type="evidence" value="ECO:0007669"/>
    <property type="project" value="UniProtKB-UniRule"/>
</dbReference>
<dbReference type="GO" id="GO:0000105">
    <property type="term" value="P:L-histidine biosynthetic process"/>
    <property type="evidence" value="ECO:0007669"/>
    <property type="project" value="UniProtKB-KW"/>
</dbReference>
<dbReference type="GO" id="GO:0009086">
    <property type="term" value="P:methionine biosynthetic process"/>
    <property type="evidence" value="ECO:0007669"/>
    <property type="project" value="UniProtKB-KW"/>
</dbReference>
<dbReference type="GO" id="GO:0006164">
    <property type="term" value="P:purine nucleotide biosynthetic process"/>
    <property type="evidence" value="ECO:0007669"/>
    <property type="project" value="UniProtKB-KW"/>
</dbReference>
<dbReference type="GO" id="GO:0035999">
    <property type="term" value="P:tetrahydrofolate interconversion"/>
    <property type="evidence" value="ECO:0007669"/>
    <property type="project" value="UniProtKB-UniRule"/>
</dbReference>
<dbReference type="CDD" id="cd01080">
    <property type="entry name" value="NAD_bind_m-THF_DH_Cyclohyd"/>
    <property type="match status" value="1"/>
</dbReference>
<dbReference type="FunFam" id="3.40.50.10860:FF:000001">
    <property type="entry name" value="Bifunctional protein FolD"/>
    <property type="match status" value="1"/>
</dbReference>
<dbReference type="FunFam" id="3.40.50.720:FF:000006">
    <property type="entry name" value="Bifunctional protein FolD"/>
    <property type="match status" value="1"/>
</dbReference>
<dbReference type="Gene3D" id="3.40.50.10860">
    <property type="entry name" value="Leucine Dehydrogenase, chain A, domain 1"/>
    <property type="match status" value="1"/>
</dbReference>
<dbReference type="Gene3D" id="3.40.50.720">
    <property type="entry name" value="NAD(P)-binding Rossmann-like Domain"/>
    <property type="match status" value="1"/>
</dbReference>
<dbReference type="HAMAP" id="MF_01576">
    <property type="entry name" value="THF_DHG_CYH"/>
    <property type="match status" value="1"/>
</dbReference>
<dbReference type="InterPro" id="IPR046346">
    <property type="entry name" value="Aminoacid_DH-like_N_sf"/>
</dbReference>
<dbReference type="InterPro" id="IPR036291">
    <property type="entry name" value="NAD(P)-bd_dom_sf"/>
</dbReference>
<dbReference type="InterPro" id="IPR000672">
    <property type="entry name" value="THF_DH/CycHdrlase"/>
</dbReference>
<dbReference type="InterPro" id="IPR020630">
    <property type="entry name" value="THF_DH/CycHdrlase_cat_dom"/>
</dbReference>
<dbReference type="InterPro" id="IPR020867">
    <property type="entry name" value="THF_DH/CycHdrlase_CS"/>
</dbReference>
<dbReference type="InterPro" id="IPR020631">
    <property type="entry name" value="THF_DH/CycHdrlase_NAD-bd_dom"/>
</dbReference>
<dbReference type="NCBIfam" id="NF008058">
    <property type="entry name" value="PRK10792.1"/>
    <property type="match status" value="1"/>
</dbReference>
<dbReference type="NCBIfam" id="NF010767">
    <property type="entry name" value="PRK14170.1"/>
    <property type="match status" value="1"/>
</dbReference>
<dbReference type="NCBIfam" id="NF010783">
    <property type="entry name" value="PRK14186.1"/>
    <property type="match status" value="1"/>
</dbReference>
<dbReference type="NCBIfam" id="NF010785">
    <property type="entry name" value="PRK14188.1"/>
    <property type="match status" value="1"/>
</dbReference>
<dbReference type="PANTHER" id="PTHR48099:SF5">
    <property type="entry name" value="C-1-TETRAHYDROFOLATE SYNTHASE, CYTOPLASMIC"/>
    <property type="match status" value="1"/>
</dbReference>
<dbReference type="PANTHER" id="PTHR48099">
    <property type="entry name" value="C-1-TETRAHYDROFOLATE SYNTHASE, CYTOPLASMIC-RELATED"/>
    <property type="match status" value="1"/>
</dbReference>
<dbReference type="Pfam" id="PF00763">
    <property type="entry name" value="THF_DHG_CYH"/>
    <property type="match status" value="1"/>
</dbReference>
<dbReference type="Pfam" id="PF02882">
    <property type="entry name" value="THF_DHG_CYH_C"/>
    <property type="match status" value="1"/>
</dbReference>
<dbReference type="PRINTS" id="PR00085">
    <property type="entry name" value="THFDHDRGNASE"/>
</dbReference>
<dbReference type="SUPFAM" id="SSF53223">
    <property type="entry name" value="Aminoacid dehydrogenase-like, N-terminal domain"/>
    <property type="match status" value="1"/>
</dbReference>
<dbReference type="SUPFAM" id="SSF51735">
    <property type="entry name" value="NAD(P)-binding Rossmann-fold domains"/>
    <property type="match status" value="1"/>
</dbReference>
<dbReference type="PROSITE" id="PS00766">
    <property type="entry name" value="THF_DHG_CYH_1"/>
    <property type="match status" value="1"/>
</dbReference>
<dbReference type="PROSITE" id="PS00767">
    <property type="entry name" value="THF_DHG_CYH_2"/>
    <property type="match status" value="1"/>
</dbReference>
<protein>
    <recommendedName>
        <fullName evidence="1">Bifunctional protein FolD</fullName>
    </recommendedName>
    <domain>
        <recommendedName>
            <fullName evidence="1">Methylenetetrahydrofolate dehydrogenase</fullName>
            <ecNumber evidence="1">1.5.1.5</ecNumber>
        </recommendedName>
    </domain>
    <domain>
        <recommendedName>
            <fullName evidence="1">Methenyltetrahydrofolate cyclohydrolase</fullName>
            <ecNumber evidence="1">3.5.4.9</ecNumber>
        </recommendedName>
    </domain>
</protein>
<gene>
    <name evidence="1" type="primary">folD</name>
    <name type="ordered locus">lwe1375</name>
</gene>